<organism>
    <name type="scientific">Rattus norvegicus</name>
    <name type="common">Rat</name>
    <dbReference type="NCBI Taxonomy" id="10116"/>
    <lineage>
        <taxon>Eukaryota</taxon>
        <taxon>Metazoa</taxon>
        <taxon>Chordata</taxon>
        <taxon>Craniata</taxon>
        <taxon>Vertebrata</taxon>
        <taxon>Euteleostomi</taxon>
        <taxon>Mammalia</taxon>
        <taxon>Eutheria</taxon>
        <taxon>Euarchontoglires</taxon>
        <taxon>Glires</taxon>
        <taxon>Rodentia</taxon>
        <taxon>Myomorpha</taxon>
        <taxon>Muroidea</taxon>
        <taxon>Muridae</taxon>
        <taxon>Murinae</taxon>
        <taxon>Rattus</taxon>
    </lineage>
</organism>
<name>ANKS3_RAT</name>
<accession>Q5M9H0</accession>
<reference key="1">
    <citation type="journal article" date="2004" name="Genome Res.">
        <title>The status, quality, and expansion of the NIH full-length cDNA project: the Mammalian Gene Collection (MGC).</title>
        <authorList>
            <consortium name="The MGC Project Team"/>
        </authorList>
    </citation>
    <scope>NUCLEOTIDE SEQUENCE [LARGE SCALE MRNA]</scope>
    <source>
        <tissue>Testis</tissue>
    </source>
</reference>
<reference key="2">
    <citation type="journal article" date="2012" name="Nat. Commun.">
        <title>Quantitative maps of protein phosphorylation sites across 14 different rat organs and tissues.</title>
        <authorList>
            <person name="Lundby A."/>
            <person name="Secher A."/>
            <person name="Lage K."/>
            <person name="Nordsborg N.B."/>
            <person name="Dmytriyev A."/>
            <person name="Lundby C."/>
            <person name="Olsen J.V."/>
        </authorList>
    </citation>
    <scope>PHOSPHORYLATION [LARGE SCALE ANALYSIS] AT SER-2 AND SER-5</scope>
    <scope>IDENTIFICATION BY MASS SPECTROMETRY [LARGE SCALE ANALYSIS]</scope>
</reference>
<reference key="3">
    <citation type="journal article" date="2015" name="Kidney Int.">
        <title>Anks3 interacts with nephronophthisis proteins and is required for normal renal development.</title>
        <authorList>
            <person name="Yakulov T.A."/>
            <person name="Yasunaga T."/>
            <person name="Ramachandran H."/>
            <person name="Engel C."/>
            <person name="Mueller B."/>
            <person name="Hoff S."/>
            <person name="Dengjel J."/>
            <person name="Lienkamp S.S."/>
            <person name="Walz G."/>
        </authorList>
    </citation>
    <scope>INTERACTION WITH ANKS6</scope>
</reference>
<evidence type="ECO:0000250" key="1">
    <source>
        <dbReference type="UniProtKB" id="Q6ZW76"/>
    </source>
</evidence>
<evidence type="ECO:0000250" key="2">
    <source>
        <dbReference type="UniProtKB" id="Q9CZK6"/>
    </source>
</evidence>
<evidence type="ECO:0000255" key="3"/>
<evidence type="ECO:0000255" key="4">
    <source>
        <dbReference type="PROSITE-ProRule" id="PRU00184"/>
    </source>
</evidence>
<evidence type="ECO:0000256" key="5">
    <source>
        <dbReference type="SAM" id="MobiDB-lite"/>
    </source>
</evidence>
<evidence type="ECO:0000269" key="6">
    <source>
    </source>
</evidence>
<evidence type="ECO:0007744" key="7">
    <source>
    </source>
</evidence>
<gene>
    <name type="primary">Anks3</name>
</gene>
<feature type="chain" id="PRO_0000230779" description="Ankyrin repeat and SAM domain-containing protein 3">
    <location>
        <begin position="1"/>
        <end position="663"/>
    </location>
</feature>
<feature type="repeat" description="ANK 1">
    <location>
        <begin position="34"/>
        <end position="64"/>
    </location>
</feature>
<feature type="repeat" description="ANK 2">
    <location>
        <begin position="68"/>
        <end position="97"/>
    </location>
</feature>
<feature type="repeat" description="ANK 3">
    <location>
        <begin position="101"/>
        <end position="130"/>
    </location>
</feature>
<feature type="repeat" description="ANK 4">
    <location>
        <begin position="134"/>
        <end position="163"/>
    </location>
</feature>
<feature type="repeat" description="ANK 5">
    <location>
        <begin position="168"/>
        <end position="197"/>
    </location>
</feature>
<feature type="repeat" description="ANK 6">
    <location>
        <begin position="201"/>
        <end position="220"/>
    </location>
</feature>
<feature type="domain" description="SAM" evidence="4">
    <location>
        <begin position="424"/>
        <end position="487"/>
    </location>
</feature>
<feature type="region of interest" description="Interaction with NEK7" evidence="2">
    <location>
        <begin position="1"/>
        <end position="421"/>
    </location>
</feature>
<feature type="region of interest" description="Disordered" evidence="5">
    <location>
        <begin position="242"/>
        <end position="261"/>
    </location>
</feature>
<feature type="region of interest" description="Disordered" evidence="5">
    <location>
        <begin position="278"/>
        <end position="425"/>
    </location>
</feature>
<feature type="region of interest" description="Disordered" evidence="5">
    <location>
        <begin position="585"/>
        <end position="604"/>
    </location>
</feature>
<feature type="region of interest" description="Disordered" evidence="5">
    <location>
        <begin position="637"/>
        <end position="663"/>
    </location>
</feature>
<feature type="coiled-coil region" evidence="3">
    <location>
        <begin position="500"/>
        <end position="575"/>
    </location>
</feature>
<feature type="compositionally biased region" description="Basic and acidic residues" evidence="5">
    <location>
        <begin position="322"/>
        <end position="337"/>
    </location>
</feature>
<feature type="compositionally biased region" description="Basic residues" evidence="5">
    <location>
        <begin position="378"/>
        <end position="395"/>
    </location>
</feature>
<feature type="compositionally biased region" description="Acidic residues" evidence="5">
    <location>
        <begin position="641"/>
        <end position="651"/>
    </location>
</feature>
<feature type="compositionally biased region" description="Basic and acidic residues" evidence="5">
    <location>
        <begin position="654"/>
        <end position="663"/>
    </location>
</feature>
<feature type="modified residue" description="Phosphoserine" evidence="7">
    <location>
        <position position="2"/>
    </location>
</feature>
<feature type="modified residue" description="Phosphoserine" evidence="7">
    <location>
        <position position="5"/>
    </location>
</feature>
<feature type="modified residue" description="3-hydroxyasparagine" evidence="2">
    <location>
        <position position="96"/>
    </location>
</feature>
<feature type="modified residue" description="Phosphoserine" evidence="2">
    <location>
        <position position="201"/>
    </location>
</feature>
<feature type="modified residue" description="Phosphoserine" evidence="2">
    <location>
        <position position="225"/>
    </location>
</feature>
<feature type="modified residue" description="Phosphoserine" evidence="2">
    <location>
        <position position="243"/>
    </location>
</feature>
<feature type="modified residue" description="Phosphoserine" evidence="2">
    <location>
        <position position="244"/>
    </location>
</feature>
<feature type="modified residue" description="Phosphoserine" evidence="2">
    <location>
        <position position="245"/>
    </location>
</feature>
<feature type="modified residue" description="Phosphothreonine" evidence="2">
    <location>
        <position position="318"/>
    </location>
</feature>
<feature type="modified residue" description="Phosphoserine" evidence="2">
    <location>
        <position position="319"/>
    </location>
</feature>
<feature type="modified residue" description="Phosphoserine" evidence="2">
    <location>
        <position position="366"/>
    </location>
</feature>
<feature type="modified residue" description="Phosphoserine" evidence="2">
    <location>
        <position position="369"/>
    </location>
</feature>
<feature type="modified residue" description="Phosphoserine" evidence="2">
    <location>
        <position position="373"/>
    </location>
</feature>
<feature type="modified residue" description="Phosphoserine" evidence="2">
    <location>
        <position position="540"/>
    </location>
</feature>
<sequence>MSELSDEASEPELLNRSLSMWHGLGAQVSREELDVPLDLHTAASIGQYEVVKECVQRRELDLNKKNGGGWTPLMYASYIGHDTIVHLLLEAGVSVNVPTPEGQTPLMLASSCGNESIAYFLLQQGAELEMKDIQGWTALFHCTSAGHQQMVKFLLESGANANVREPVYGFTPLMEAAAAGHEIIVQYFLNHGVKVDTRDHSGATARMLAKQYGHMKIVALMETHSPVLPKSLYRSSENYEDLSSSDESWPVPQRQRPCRKKGLSIHEGPRALARITATGLGGKTPDSYEQVPPRGYVTFTSSDENTMEGEGLCYRDVTSPINERDVESSSSSSREEPTFCASLGPVWRSSSSDGLARAQGLSSEASIESNEDSDHARKSSVRKQTRTYLKNKSRHNNSDGHWPSSTGTARTPGSEPQAEKSPYSGPQDLATLLEQIGCLKYLQVFEEQDVDLRIFLTLTESDLKEIGITLFGPKRKMTSAIARWHSSARPPSDALELAYADRLEAEMQELAIQLHKCCEEAEALRGQVSQEQELRAVVESCLLEQDSARKDIHAQLQEAQTLAQDAALVLDQLRACQAELSARLKQHHSPSEATQNPPFLPADSKGWPIPLQALSLPELSGALEDRVHEMGIMLRNAEPGETTDAEWEEMEGTIARRDDSDVG</sequence>
<protein>
    <recommendedName>
        <fullName>Ankyrin repeat and SAM domain-containing protein 3</fullName>
    </recommendedName>
</protein>
<proteinExistence type="evidence at protein level"/>
<comment type="function">
    <text evidence="2">May be involved in vasopressin signaling in the kidney.</text>
</comment>
<comment type="subunit">
    <text evidence="1 2 6">Homooligomer (By similarity). Interacts (via SAM domain) with ANKS6 (via SAM domain) (PubMed:25671767). Interacts with BICC1 (By similarity). Interacts with NPHP1 (By similarity). Interacts with NEK8 (By similarity). Interacts with HIF1AN (By similarity). Interacts with NEK7; this interaction alters the subcellular distribution of NEK7 by preventing its nuclear translocation (By similarity).</text>
</comment>
<comment type="subcellular location">
    <subcellularLocation>
        <location evidence="2">Cell projection</location>
        <location evidence="2">Cilium</location>
    </subcellularLocation>
    <subcellularLocation>
        <location evidence="2">Cytoplasm</location>
    </subcellularLocation>
</comment>
<comment type="domain">
    <text evidence="1">The SAM domain mediates homooligomerization.</text>
</comment>
<comment type="PTM">
    <text evidence="2">Hydroxylated at Asn-96, most probably by HIF1AN.</text>
</comment>
<comment type="PTM">
    <text evidence="2">Phosphorylations at Ser-5, Ser-225, Thr-318, Ser-319, Ser-366 and Ser-369 occur in a NEK7-dependent manner.</text>
</comment>
<comment type="PTM">
    <text evidence="2">Polyubiquitinated.</text>
</comment>
<dbReference type="EMBL" id="BC087062">
    <property type="protein sequence ID" value="AAH87062.1"/>
    <property type="molecule type" value="mRNA"/>
</dbReference>
<dbReference type="RefSeq" id="NP_001009676.1">
    <property type="nucleotide sequence ID" value="NM_001009676.2"/>
</dbReference>
<dbReference type="SMR" id="Q5M9H0"/>
<dbReference type="FunCoup" id="Q5M9H0">
    <property type="interactions" value="2225"/>
</dbReference>
<dbReference type="STRING" id="10116.ENSRNOP00000004298"/>
<dbReference type="iPTMnet" id="Q5M9H0"/>
<dbReference type="PhosphoSitePlus" id="Q5M9H0"/>
<dbReference type="PaxDb" id="10116-ENSRNOP00000004298"/>
<dbReference type="Ensembl" id="ENSRNOT00000004298.7">
    <property type="protein sequence ID" value="ENSRNOP00000004298.4"/>
    <property type="gene ID" value="ENSRNOG00000003186.7"/>
</dbReference>
<dbReference type="GeneID" id="302937"/>
<dbReference type="KEGG" id="rno:302937"/>
<dbReference type="UCSC" id="RGD:1305833">
    <property type="organism name" value="rat"/>
</dbReference>
<dbReference type="AGR" id="RGD:1305833"/>
<dbReference type="CTD" id="124401"/>
<dbReference type="RGD" id="1305833">
    <property type="gene designation" value="Anks3"/>
</dbReference>
<dbReference type="eggNOG" id="KOG0504">
    <property type="taxonomic scope" value="Eukaryota"/>
</dbReference>
<dbReference type="GeneTree" id="ENSGT00940000156610"/>
<dbReference type="InParanoid" id="Q5M9H0"/>
<dbReference type="OMA" id="RKDVHTQ"/>
<dbReference type="OrthoDB" id="539213at2759"/>
<dbReference type="PhylomeDB" id="Q5M9H0"/>
<dbReference type="TreeFam" id="TF331487"/>
<dbReference type="PRO" id="PR:Q5M9H0"/>
<dbReference type="Proteomes" id="UP000002494">
    <property type="component" value="Chromosome 10"/>
</dbReference>
<dbReference type="Bgee" id="ENSRNOG00000003186">
    <property type="expression patterns" value="Expressed in frontal cortex and 20 other cell types or tissues"/>
</dbReference>
<dbReference type="ExpressionAtlas" id="Q5M9H0">
    <property type="expression patterns" value="baseline and differential"/>
</dbReference>
<dbReference type="GO" id="GO:0005929">
    <property type="term" value="C:cilium"/>
    <property type="evidence" value="ECO:0000266"/>
    <property type="project" value="RGD"/>
</dbReference>
<dbReference type="GO" id="GO:0005737">
    <property type="term" value="C:cytoplasm"/>
    <property type="evidence" value="ECO:0000250"/>
    <property type="project" value="UniProtKB"/>
</dbReference>
<dbReference type="CDD" id="cd09519">
    <property type="entry name" value="SAM_ANKS3"/>
    <property type="match status" value="1"/>
</dbReference>
<dbReference type="Gene3D" id="1.25.40.20">
    <property type="entry name" value="Ankyrin repeat-containing domain"/>
    <property type="match status" value="1"/>
</dbReference>
<dbReference type="Gene3D" id="1.10.150.50">
    <property type="entry name" value="Transcription Factor, Ets-1"/>
    <property type="match status" value="1"/>
</dbReference>
<dbReference type="InterPro" id="IPR047238">
    <property type="entry name" value="ANKS3_SAM"/>
</dbReference>
<dbReference type="InterPro" id="IPR002110">
    <property type="entry name" value="Ankyrin_rpt"/>
</dbReference>
<dbReference type="InterPro" id="IPR036770">
    <property type="entry name" value="Ankyrin_rpt-contain_sf"/>
</dbReference>
<dbReference type="InterPro" id="IPR001660">
    <property type="entry name" value="SAM"/>
</dbReference>
<dbReference type="InterPro" id="IPR013761">
    <property type="entry name" value="SAM/pointed_sf"/>
</dbReference>
<dbReference type="PANTHER" id="PTHR24184:SF6">
    <property type="entry name" value="ANKYRIN REPEAT AND SAM DOMAIN-CONTAINING PROTEIN 3"/>
    <property type="match status" value="1"/>
</dbReference>
<dbReference type="PANTHER" id="PTHR24184">
    <property type="entry name" value="SI:CH211-189E2.2"/>
    <property type="match status" value="1"/>
</dbReference>
<dbReference type="Pfam" id="PF12796">
    <property type="entry name" value="Ank_2"/>
    <property type="match status" value="1"/>
</dbReference>
<dbReference type="Pfam" id="PF13637">
    <property type="entry name" value="Ank_4"/>
    <property type="match status" value="1"/>
</dbReference>
<dbReference type="Pfam" id="PF00536">
    <property type="entry name" value="SAM_1"/>
    <property type="match status" value="1"/>
</dbReference>
<dbReference type="PRINTS" id="PR01415">
    <property type="entry name" value="ANKYRIN"/>
</dbReference>
<dbReference type="SMART" id="SM00248">
    <property type="entry name" value="ANK"/>
    <property type="match status" value="6"/>
</dbReference>
<dbReference type="SMART" id="SM00454">
    <property type="entry name" value="SAM"/>
    <property type="match status" value="1"/>
</dbReference>
<dbReference type="SUPFAM" id="SSF48403">
    <property type="entry name" value="Ankyrin repeat"/>
    <property type="match status" value="1"/>
</dbReference>
<dbReference type="SUPFAM" id="SSF47769">
    <property type="entry name" value="SAM/Pointed domain"/>
    <property type="match status" value="1"/>
</dbReference>
<dbReference type="PROSITE" id="PS50297">
    <property type="entry name" value="ANK_REP_REGION"/>
    <property type="match status" value="1"/>
</dbReference>
<dbReference type="PROSITE" id="PS50088">
    <property type="entry name" value="ANK_REPEAT"/>
    <property type="match status" value="4"/>
</dbReference>
<dbReference type="PROSITE" id="PS50105">
    <property type="entry name" value="SAM_DOMAIN"/>
    <property type="match status" value="1"/>
</dbReference>
<keyword id="KW-0040">ANK repeat</keyword>
<keyword id="KW-0966">Cell projection</keyword>
<keyword id="KW-0175">Coiled coil</keyword>
<keyword id="KW-0963">Cytoplasm</keyword>
<keyword id="KW-0379">Hydroxylation</keyword>
<keyword id="KW-0597">Phosphoprotein</keyword>
<keyword id="KW-1185">Reference proteome</keyword>
<keyword id="KW-0677">Repeat</keyword>
<keyword id="KW-0832">Ubl conjugation</keyword>